<comment type="function">
    <text evidence="1">Produces ATP from ADP in the presence of a proton gradient across the membrane. The catalytic sites are hosted primarily by the beta subunits.</text>
</comment>
<comment type="catalytic activity">
    <reaction evidence="1">
        <text>ATP + H2O + 4 H(+)(in) = ADP + phosphate + 5 H(+)(out)</text>
        <dbReference type="Rhea" id="RHEA:57720"/>
        <dbReference type="ChEBI" id="CHEBI:15377"/>
        <dbReference type="ChEBI" id="CHEBI:15378"/>
        <dbReference type="ChEBI" id="CHEBI:30616"/>
        <dbReference type="ChEBI" id="CHEBI:43474"/>
        <dbReference type="ChEBI" id="CHEBI:456216"/>
        <dbReference type="EC" id="7.1.2.2"/>
    </reaction>
</comment>
<comment type="subunit">
    <text evidence="1">F-type ATPases have 2 components, CF(1) - the catalytic core - and CF(0) - the membrane proton channel. CF(1) has five subunits: alpha(3), beta(3), gamma(1), delta(1), epsilon(1). CF(0) has three main subunits: a(1), b(2) and c(9-12). The alpha and beta chains form an alternating ring which encloses part of the gamma chain. CF(1) is attached to CF(0) by a central stalk formed by the gamma and epsilon chains, while a peripheral stalk is formed by the delta and b chains.</text>
</comment>
<comment type="subcellular location">
    <subcellularLocation>
        <location evidence="1">Cell membrane</location>
        <topology evidence="1">Peripheral membrane protein</topology>
    </subcellularLocation>
</comment>
<comment type="similarity">
    <text evidence="1">Belongs to the ATPase alpha/beta chains family.</text>
</comment>
<accession>A3Q3B1</accession>
<gene>
    <name evidence="1" type="primary">atpD</name>
    <name type="ordered locus">Mjls_3862</name>
</gene>
<dbReference type="EC" id="7.1.2.2" evidence="1"/>
<dbReference type="EMBL" id="CP000580">
    <property type="protein sequence ID" value="ABN99638.1"/>
    <property type="molecule type" value="Genomic_DNA"/>
</dbReference>
<dbReference type="SMR" id="A3Q3B1"/>
<dbReference type="KEGG" id="mjl:Mjls_3862"/>
<dbReference type="HOGENOM" id="CLU_022398_0_2_11"/>
<dbReference type="BioCyc" id="MSP164757:G1G8C-3902-MONOMER"/>
<dbReference type="GO" id="GO:0005886">
    <property type="term" value="C:plasma membrane"/>
    <property type="evidence" value="ECO:0007669"/>
    <property type="project" value="UniProtKB-SubCell"/>
</dbReference>
<dbReference type="GO" id="GO:0045259">
    <property type="term" value="C:proton-transporting ATP synthase complex"/>
    <property type="evidence" value="ECO:0007669"/>
    <property type="project" value="UniProtKB-KW"/>
</dbReference>
<dbReference type="GO" id="GO:0005524">
    <property type="term" value="F:ATP binding"/>
    <property type="evidence" value="ECO:0007669"/>
    <property type="project" value="UniProtKB-UniRule"/>
</dbReference>
<dbReference type="GO" id="GO:0016887">
    <property type="term" value="F:ATP hydrolysis activity"/>
    <property type="evidence" value="ECO:0007669"/>
    <property type="project" value="InterPro"/>
</dbReference>
<dbReference type="GO" id="GO:0046933">
    <property type="term" value="F:proton-transporting ATP synthase activity, rotational mechanism"/>
    <property type="evidence" value="ECO:0007669"/>
    <property type="project" value="UniProtKB-UniRule"/>
</dbReference>
<dbReference type="CDD" id="cd18110">
    <property type="entry name" value="ATP-synt_F1_beta_C"/>
    <property type="match status" value="1"/>
</dbReference>
<dbReference type="CDD" id="cd18115">
    <property type="entry name" value="ATP-synt_F1_beta_N"/>
    <property type="match status" value="1"/>
</dbReference>
<dbReference type="CDD" id="cd01133">
    <property type="entry name" value="F1-ATPase_beta_CD"/>
    <property type="match status" value="1"/>
</dbReference>
<dbReference type="FunFam" id="1.10.1140.10:FF:000001">
    <property type="entry name" value="ATP synthase subunit beta"/>
    <property type="match status" value="1"/>
</dbReference>
<dbReference type="FunFam" id="2.40.10.170:FF:000005">
    <property type="entry name" value="ATP synthase subunit beta"/>
    <property type="match status" value="1"/>
</dbReference>
<dbReference type="FunFam" id="3.40.50.300:FF:000004">
    <property type="entry name" value="ATP synthase subunit beta"/>
    <property type="match status" value="1"/>
</dbReference>
<dbReference type="Gene3D" id="2.40.10.170">
    <property type="match status" value="1"/>
</dbReference>
<dbReference type="Gene3D" id="1.10.1140.10">
    <property type="entry name" value="Bovine Mitochondrial F1-atpase, Atp Synthase Beta Chain, Chain D, domain 3"/>
    <property type="match status" value="1"/>
</dbReference>
<dbReference type="Gene3D" id="3.40.50.300">
    <property type="entry name" value="P-loop containing nucleotide triphosphate hydrolases"/>
    <property type="match status" value="1"/>
</dbReference>
<dbReference type="HAMAP" id="MF_01347">
    <property type="entry name" value="ATP_synth_beta_bact"/>
    <property type="match status" value="1"/>
</dbReference>
<dbReference type="InterPro" id="IPR003593">
    <property type="entry name" value="AAA+_ATPase"/>
</dbReference>
<dbReference type="InterPro" id="IPR055190">
    <property type="entry name" value="ATP-synt_VA_C"/>
</dbReference>
<dbReference type="InterPro" id="IPR005722">
    <property type="entry name" value="ATP_synth_F1_bsu"/>
</dbReference>
<dbReference type="InterPro" id="IPR020003">
    <property type="entry name" value="ATPase_a/bsu_AS"/>
</dbReference>
<dbReference type="InterPro" id="IPR050053">
    <property type="entry name" value="ATPase_alpha/beta_chains"/>
</dbReference>
<dbReference type="InterPro" id="IPR004100">
    <property type="entry name" value="ATPase_F1/V1/A1_a/bsu_N"/>
</dbReference>
<dbReference type="InterPro" id="IPR036121">
    <property type="entry name" value="ATPase_F1/V1/A1_a/bsu_N_sf"/>
</dbReference>
<dbReference type="InterPro" id="IPR000194">
    <property type="entry name" value="ATPase_F1/V1/A1_a/bsu_nucl-bd"/>
</dbReference>
<dbReference type="InterPro" id="IPR024034">
    <property type="entry name" value="ATPase_F1/V1_b/a_C"/>
</dbReference>
<dbReference type="InterPro" id="IPR027417">
    <property type="entry name" value="P-loop_NTPase"/>
</dbReference>
<dbReference type="NCBIfam" id="TIGR01039">
    <property type="entry name" value="atpD"/>
    <property type="match status" value="1"/>
</dbReference>
<dbReference type="PANTHER" id="PTHR15184">
    <property type="entry name" value="ATP SYNTHASE"/>
    <property type="match status" value="1"/>
</dbReference>
<dbReference type="PANTHER" id="PTHR15184:SF71">
    <property type="entry name" value="ATP SYNTHASE SUBUNIT BETA, MITOCHONDRIAL"/>
    <property type="match status" value="1"/>
</dbReference>
<dbReference type="Pfam" id="PF00006">
    <property type="entry name" value="ATP-synt_ab"/>
    <property type="match status" value="1"/>
</dbReference>
<dbReference type="Pfam" id="PF02874">
    <property type="entry name" value="ATP-synt_ab_N"/>
    <property type="match status" value="1"/>
</dbReference>
<dbReference type="Pfam" id="PF22919">
    <property type="entry name" value="ATP-synt_VA_C"/>
    <property type="match status" value="1"/>
</dbReference>
<dbReference type="SMART" id="SM00382">
    <property type="entry name" value="AAA"/>
    <property type="match status" value="1"/>
</dbReference>
<dbReference type="SUPFAM" id="SSF47917">
    <property type="entry name" value="C-terminal domain of alpha and beta subunits of F1 ATP synthase"/>
    <property type="match status" value="1"/>
</dbReference>
<dbReference type="SUPFAM" id="SSF50615">
    <property type="entry name" value="N-terminal domain of alpha and beta subunits of F1 ATP synthase"/>
    <property type="match status" value="1"/>
</dbReference>
<dbReference type="SUPFAM" id="SSF52540">
    <property type="entry name" value="P-loop containing nucleoside triphosphate hydrolases"/>
    <property type="match status" value="1"/>
</dbReference>
<dbReference type="PROSITE" id="PS00152">
    <property type="entry name" value="ATPASE_ALPHA_BETA"/>
    <property type="match status" value="1"/>
</dbReference>
<proteinExistence type="inferred from homology"/>
<feature type="chain" id="PRO_0000339550" description="ATP synthase subunit beta">
    <location>
        <begin position="1"/>
        <end position="517"/>
    </location>
</feature>
<feature type="region of interest" description="Disordered" evidence="2">
    <location>
        <begin position="475"/>
        <end position="517"/>
    </location>
</feature>
<feature type="compositionally biased region" description="Basic and acidic residues" evidence="2">
    <location>
        <begin position="475"/>
        <end position="484"/>
    </location>
</feature>
<feature type="compositionally biased region" description="Basic and acidic residues" evidence="2">
    <location>
        <begin position="495"/>
        <end position="508"/>
    </location>
</feature>
<feature type="binding site" evidence="1">
    <location>
        <begin position="167"/>
        <end position="174"/>
    </location>
    <ligand>
        <name>ATP</name>
        <dbReference type="ChEBI" id="CHEBI:30616"/>
    </ligand>
</feature>
<sequence length="517" mass="56136">MTAATEQKEKTGTDNVGRVVRVTGPVVDVEFPRGSVPELFNALHAEISYKDLAKTLTLEVAQHLGDSLVRCISMQPTDGLVRGVDVTDTGASISVPVGEGVKGHVFNALGACLDDPGYGKDFEKWSIHRKPPAFDELEPRTEMLETGLKVVDLLTPYVRGGKIALFGGAGVGKTVLIQEMINRIARNFGGTSVFAGVGERTREGNDLWVELADANVLKDTALVFGQMDEPPGTRMRVALSALTMAEYFRDEKQQDVLLFIDNIFRFTQAGSEVSTLLGRMPSAVGYQPTLADEMGELQERITSTRGRSITSMQAVYVPADDYTDPAPATTFAHLDATTELSRSVFSKGIFPAVDPLASSSTILDPSVVGDEHYRVAQEVIRILQRYKDLQDIIAILGIDELAEEDKQLVQRARRIERFLSQNMMAAEQFTGQPGSTVPLKETIEAFDKLSKGDFDHLPEQAFFLIGGLEDLQRKAESMGAKMDDGGSDGAPPPSDSKDKGKGDSKADDKGDDADKDA</sequence>
<evidence type="ECO:0000255" key="1">
    <source>
        <dbReference type="HAMAP-Rule" id="MF_01347"/>
    </source>
</evidence>
<evidence type="ECO:0000256" key="2">
    <source>
        <dbReference type="SAM" id="MobiDB-lite"/>
    </source>
</evidence>
<reference key="1">
    <citation type="submission" date="2007-02" db="EMBL/GenBank/DDBJ databases">
        <title>Complete sequence of Mycobacterium sp. JLS.</title>
        <authorList>
            <consortium name="US DOE Joint Genome Institute"/>
            <person name="Copeland A."/>
            <person name="Lucas S."/>
            <person name="Lapidus A."/>
            <person name="Barry K."/>
            <person name="Detter J.C."/>
            <person name="Glavina del Rio T."/>
            <person name="Hammon N."/>
            <person name="Israni S."/>
            <person name="Dalin E."/>
            <person name="Tice H."/>
            <person name="Pitluck S."/>
            <person name="Chain P."/>
            <person name="Malfatti S."/>
            <person name="Shin M."/>
            <person name="Vergez L."/>
            <person name="Schmutz J."/>
            <person name="Larimer F."/>
            <person name="Land M."/>
            <person name="Hauser L."/>
            <person name="Kyrpides N."/>
            <person name="Mikhailova N."/>
            <person name="Miller C.D."/>
            <person name="Anderson A.J."/>
            <person name="Sims R.C."/>
            <person name="Richardson P."/>
        </authorList>
    </citation>
    <scope>NUCLEOTIDE SEQUENCE [LARGE SCALE GENOMIC DNA]</scope>
    <source>
        <strain>JLS</strain>
    </source>
</reference>
<organism>
    <name type="scientific">Mycobacterium sp. (strain JLS)</name>
    <dbReference type="NCBI Taxonomy" id="164757"/>
    <lineage>
        <taxon>Bacteria</taxon>
        <taxon>Bacillati</taxon>
        <taxon>Actinomycetota</taxon>
        <taxon>Actinomycetes</taxon>
        <taxon>Mycobacteriales</taxon>
        <taxon>Mycobacteriaceae</taxon>
        <taxon>Mycobacterium</taxon>
    </lineage>
</organism>
<name>ATPB_MYCSJ</name>
<keyword id="KW-0066">ATP synthesis</keyword>
<keyword id="KW-0067">ATP-binding</keyword>
<keyword id="KW-1003">Cell membrane</keyword>
<keyword id="KW-0139">CF(1)</keyword>
<keyword id="KW-0375">Hydrogen ion transport</keyword>
<keyword id="KW-0406">Ion transport</keyword>
<keyword id="KW-0472">Membrane</keyword>
<keyword id="KW-0547">Nucleotide-binding</keyword>
<keyword id="KW-1278">Translocase</keyword>
<keyword id="KW-0813">Transport</keyword>
<protein>
    <recommendedName>
        <fullName evidence="1">ATP synthase subunit beta</fullName>
        <ecNumber evidence="1">7.1.2.2</ecNumber>
    </recommendedName>
    <alternativeName>
        <fullName evidence="1">ATP synthase F1 sector subunit beta</fullName>
    </alternativeName>
    <alternativeName>
        <fullName evidence="1">F-ATPase subunit beta</fullName>
    </alternativeName>
</protein>